<proteinExistence type="evidence at protein level"/>
<feature type="signal peptide" evidence="3">
    <location>
        <begin position="1"/>
        <end position="21"/>
    </location>
</feature>
<feature type="chain" id="PRO_0000447045" description="M1-specific T cell receptor beta chain">
    <location>
        <begin position="22"/>
        <end position="310"/>
    </location>
</feature>
<feature type="transmembrane region" description="Helical" evidence="3">
    <location>
        <begin position="277"/>
        <end position="299"/>
    </location>
</feature>
<feature type="topological domain" description="Cytoplasmic" evidence="3">
    <location>
        <begin position="300"/>
        <end position="310"/>
    </location>
</feature>
<feature type="domain" description="Ig-like V-type" evidence="4">
    <location>
        <begin position="34"/>
        <end position="131"/>
    </location>
</feature>
<feature type="domain" description="Ig-like C1-type" evidence="4">
    <location>
        <begin position="140"/>
        <end position="249"/>
    </location>
</feature>
<feature type="region of interest" description="T cell receptor beta variable 19" evidence="18">
    <location>
        <begin position="22"/>
        <end position="114"/>
    </location>
</feature>
<feature type="region of interest" description="CDR1" evidence="15">
    <location>
        <begin position="46"/>
        <end position="50"/>
    </location>
</feature>
<feature type="region of interest" description="CDR2" evidence="15">
    <location>
        <begin position="68"/>
        <end position="73"/>
    </location>
</feature>
<feature type="region of interest" description="CDR3" evidence="8 10 11">
    <location>
        <begin position="110"/>
        <end position="122"/>
    </location>
</feature>
<feature type="region of interest" description="T cell receptor beta joining 2-7" evidence="18">
    <location>
        <begin position="117"/>
        <end position="131"/>
    </location>
</feature>
<feature type="region of interest" description="T cell receptor beta constant 2" evidence="19">
    <location>
        <begin position="133"/>
        <end position="310"/>
    </location>
</feature>
<feature type="region of interest" description="Connecting peptide" evidence="2">
    <location>
        <begin position="262"/>
        <end position="276"/>
    </location>
</feature>
<feature type="binding site" evidence="9">
    <location>
        <position position="49"/>
    </location>
    <ligand>
        <name>a peptide antigen</name>
        <dbReference type="ChEBI" id="CHEBI:166823"/>
        <note>M/matrix protein 1 peptide antigen</note>
    </ligand>
</feature>
<feature type="glycosylation site" description="N-linked (GlcNAc...) asparagine" evidence="3">
    <location>
        <position position="37"/>
    </location>
</feature>
<feature type="glycosylation site" description="N-linked (GlcNAc...) asparagine" evidence="5">
    <location>
        <position position="201"/>
    </location>
</feature>
<feature type="disulfide bond" evidence="4 9">
    <location>
        <begin position="42"/>
        <end position="110"/>
    </location>
</feature>
<feature type="disulfide bond" evidence="4 9">
    <location>
        <begin position="162"/>
        <end position="227"/>
    </location>
</feature>
<feature type="disulfide bond" description="Interchain (with C-224 in TRAC)" evidence="2">
    <location>
        <position position="262"/>
    </location>
</feature>
<feature type="sequence variant" id="VAR_081651" evidence="16 17 19 20">
    <original>I</original>
    <variation>S</variation>
    <location>
        <position position="114"/>
    </location>
</feature>
<feature type="mutagenesis site" description="Abolishes binding to M/matrix protein 1 peptide antigen." evidence="7">
    <original>D</original>
    <variation>A</variation>
    <variation>S</variation>
    <location>
        <position position="49"/>
    </location>
</feature>
<feature type="mutagenesis site" description="Abolishes binding to M/matrix protein 1 peptide antigen." evidence="7">
    <original>Q</original>
    <variation>A</variation>
    <variation>E</variation>
    <location>
        <position position="69"/>
    </location>
</feature>
<feature type="mutagenesis site" description="Abolishes binding to M/matrix protein 1 peptide antigen." evidence="7">
    <original>I</original>
    <variation>A</variation>
    <variation>G</variation>
    <variation>N</variation>
    <location>
        <position position="70"/>
    </location>
</feature>
<feature type="mutagenesis site" description="Abolishes binding to M/matrix protein 1 peptide antigen." evidence="7">
    <original>R</original>
    <variation>A</variation>
    <variation>H</variation>
    <location>
        <position position="115"/>
    </location>
</feature>
<feature type="strand" evidence="22">
    <location>
        <begin position="127"/>
        <end position="130"/>
    </location>
</feature>
<feature type="helix" evidence="22">
    <location>
        <begin position="134"/>
        <end position="136"/>
    </location>
</feature>
<feature type="strand" evidence="22">
    <location>
        <begin position="141"/>
        <end position="145"/>
    </location>
</feature>
<feature type="helix" evidence="22">
    <location>
        <begin position="149"/>
        <end position="154"/>
    </location>
</feature>
<feature type="strand" evidence="22">
    <location>
        <begin position="156"/>
        <end position="170"/>
    </location>
</feature>
<feature type="strand" evidence="22">
    <location>
        <begin position="173"/>
        <end position="178"/>
    </location>
</feature>
<feature type="strand" evidence="22">
    <location>
        <begin position="185"/>
        <end position="189"/>
    </location>
</feature>
<feature type="strand" evidence="22">
    <location>
        <begin position="194"/>
        <end position="197"/>
    </location>
</feature>
<feature type="strand" evidence="22">
    <location>
        <begin position="200"/>
        <end position="202"/>
    </location>
</feature>
<feature type="strand" evidence="22">
    <location>
        <begin position="205"/>
        <end position="214"/>
    </location>
</feature>
<feature type="helix" evidence="22">
    <location>
        <begin position="215"/>
        <end position="218"/>
    </location>
</feature>
<feature type="strand" evidence="22">
    <location>
        <begin position="224"/>
        <end position="230"/>
    </location>
</feature>
<feature type="strand" evidence="22">
    <location>
        <begin position="242"/>
        <end position="244"/>
    </location>
</feature>
<feature type="strand" evidence="22">
    <location>
        <begin position="251"/>
        <end position="257"/>
    </location>
</feature>
<feature type="strand" evidence="22">
    <location>
        <begin position="261"/>
        <end position="263"/>
    </location>
</feature>
<feature type="turn" evidence="22">
    <location>
        <begin position="266"/>
        <end position="268"/>
    </location>
</feature>
<feature type="helix" evidence="22">
    <location>
        <begin position="269"/>
        <end position="304"/>
    </location>
</feature>
<name>TRBR1_HUMAN</name>
<comment type="function">
    <text evidence="1 6 7 8 9 10 11">The beta chain of TRAV27*01J42*01C*01/TRBV19*01J2S7*01C*02 alpha-beta T cell receptor (TR) clonotype that is specific for HLA-A*02:01-restricted M/matrix protein 1 immunodominant epitope GILGFVFTL of influenza A virus (IAV). Classified as a public TCR clonotype, it is preferentially selected in effector memory CD8-positive T cells among multiple HLA-A*02:01 carriers/individuals and confers long-lived immunity against IAV infection. Can cross-recognize sporadically emerging IAV variants by molecular mimicry, inducing immunity toward different influenza strains (PubMed:12796775, PubMed:18275829, PubMed:1833769, PubMed:27036003, PubMed:29997621, PubMed:7807026). Antigen recognition initiates TR-CD3 clustering on the cell surface and intracellular activation of LCK that phosphorylates the ITAM motifs of CD3G, CD3D, CD3E and CD247 enabling the recruitment of ZAP70. In turn, ZAP70 phosphorylates LAT, which recruits numerous signaling molecules to form the LAT signalosome. The LAT signalosome propagates signal branching to three major signaling pathways, the calcium, the mitogen-activated protein kinase (MAPK) kinase and the nuclear factor NF-kappa-B (NF-kB) pathways, leading to the mobilization of transcription factors that are critical for gene expression and essential for T cell differentiation into effector/memory T cells (By similarity).</text>
</comment>
<comment type="subunit">
    <text evidence="1 6 7 9">Disulfide-linked heterodimer with TRAV27*01J42*01C*01 alpha chain. The TR primarily interacts via its CDR3-beta domain with M/matrix protein 1-derived peptide (GILGFVFTL) displayed by HLA-A*02.01 in a 'peg-notch' recognition mode (PubMed:12796775, PubMed:18275829, PubMed:27036003). The alpha-beta TR associates with the transmembrane signaling CD3 coreceptor proteins to form the TR-CD3 (TCR). The assembly of alpha-beta TR heterodimers with CD3 occurs in the endoplasmic reticulum where a single alpha-beta TR heterodimer associates with one CD3D-CD3E heterodimer, one CD3G-CD3E heterodimer and one CD247 homodimer forming a stable octameric structure. CD3D-CD3E and CD3G-CD3E heterodimers preferentially associate with TR alpha and TR beta chains (via TM domain), respectively. The association of the CD247 homodimer is the last step of TCR assembly in the endoplasmic reticulum and is required for transport to the cell surface (By similarity).</text>
</comment>
<comment type="subcellular location">
    <subcellularLocation>
        <location evidence="10">Cell membrane</location>
    </subcellularLocation>
</comment>
<comment type="tissue specificity">
    <text evidence="10">Expressed in M/matrix protein 1-specific effector memory CD8-positive T cells readily detectable in the peripheral blood, secondary lymphoid organs and lung (primary site of infection) of IAV infected individuals.</text>
</comment>
<comment type="domain">
    <text evidence="6 7 15">The complementarity-determining region CDR1 confers specificity to the peptide antigen. Assumes a loop structure that recognizes the peptide-HLA-A*02-B2M complex.</text>
</comment>
<comment type="domain">
    <text evidence="6 7 15">The complementarity-determining region CDR2 confers specificity to the peptide antigen. Assumes a loop structure that recognizes the peptide-HLA-A*02-B2M complex.</text>
</comment>
<comment type="domain">
    <text evidence="6 7 8 10 11">The complementarity-determining region CDR3 confers specificity to the peptide antigen. Assumes a loop structure that recognizes the peptide-HLA-A*02-B2M complex. Recognizes M/matrix protein 1-derived peptide mainly via its xRSx motif.</text>
</comment>
<comment type="domain">
    <text evidence="2">The connecting peptide (CP) domain is essential for signal transmission in response to antigenic stimulation, likely downstream from ZAP70 recruitment.</text>
</comment>
<comment type="domain">
    <text evidence="2">The TM domain mediates the interaction with the CD3 subunits.</text>
</comment>
<comment type="miscellaneous">
    <text evidence="16 17 19 20">The JM22 clone described as a variant of the public clonotype differs by one amino acid in the CDR3-beta domain.</text>
</comment>
<comment type="caution">
    <text evidence="8 9 10 11 12">This sequence is an example of a full-length TR beta chain. M/matrix protein 1-specific TRBV19*01J2S7*01C*02 TCR beta chain is generated by somatic recombination of variable TRBV19 (AC A0A075B6N1), diversity (AC P0DPI4) and joining TRBJ2-7 (AC A0A0A0MT78) gene segments spliced to constant TRBC2 (AC A0A5B9) gene segment (PubMed:1833769, PubMed:27036003, PubMed:29997621, PubMed:7807026). CDR3-beta clonotype identifier: sIRSSy.1456B19S1B27L11 (PubMed:19568742).</text>
</comment>
<evidence type="ECO:0000250" key="1">
    <source>
        <dbReference type="UniProtKB" id="A0A075B6N1"/>
    </source>
</evidence>
<evidence type="ECO:0000250" key="2">
    <source>
        <dbReference type="UniProtKB" id="P01850"/>
    </source>
</evidence>
<evidence type="ECO:0000255" key="3"/>
<evidence type="ECO:0000255" key="4">
    <source>
        <dbReference type="PROSITE-ProRule" id="PRU00114"/>
    </source>
</evidence>
<evidence type="ECO:0000255" key="5">
    <source>
        <dbReference type="PROSITE-ProRule" id="PRU00498"/>
    </source>
</evidence>
<evidence type="ECO:0000269" key="6">
    <source>
    </source>
</evidence>
<evidence type="ECO:0000269" key="7">
    <source>
    </source>
</evidence>
<evidence type="ECO:0000269" key="8">
    <source>
    </source>
</evidence>
<evidence type="ECO:0000269" key="9">
    <source>
    </source>
</evidence>
<evidence type="ECO:0000269" key="10">
    <source>
    </source>
</evidence>
<evidence type="ECO:0000269" key="11">
    <source>
    </source>
</evidence>
<evidence type="ECO:0000303" key="12">
    <source>
    </source>
</evidence>
<evidence type="ECO:0000303" key="13">
    <source>
    </source>
</evidence>
<evidence type="ECO:0000303" key="14">
    <source>
    </source>
</evidence>
<evidence type="ECO:0000305" key="15">
    <source>
    </source>
</evidence>
<evidence type="ECO:0000305" key="16">
    <source>
    </source>
</evidence>
<evidence type="ECO:0000305" key="17">
    <source>
    </source>
</evidence>
<evidence type="ECO:0000305" key="18">
    <source>
    </source>
</evidence>
<evidence type="ECO:0000305" key="19">
    <source>
    </source>
</evidence>
<evidence type="ECO:0000305" key="20">
    <source>
    </source>
</evidence>
<evidence type="ECO:0000312" key="21">
    <source>
        <dbReference type="HGNC" id="HGNC:12155"/>
    </source>
</evidence>
<evidence type="ECO:0007829" key="22">
    <source>
        <dbReference type="PDB" id="7FJE"/>
    </source>
</evidence>
<reference key="1">
    <citation type="journal article" date="1991" name="Proc. Natl. Acad. Sci. U.S.A.">
        <title>Extensive conservation of alpha and beta chains of the human T-cell antigen receptor recognizing HLA-A2 and influenza A matrix peptide.</title>
        <authorList>
            <person name="Moss P.A."/>
            <person name="Moots R.J."/>
            <person name="Rosenberg W.M."/>
            <person name="Rowland-Jones S.J."/>
            <person name="Bodmer H.C."/>
            <person name="McMichael A.J."/>
            <person name="Bell J.I."/>
        </authorList>
    </citation>
    <scope>NUCLEOTIDE SEQUENCE [MRNA] OF 22-132</scope>
    <scope>CDR3 DOMAIN</scope>
    <scope>FUNCTION</scope>
</reference>
<reference key="2">
    <citation type="journal article" date="1995" name="J. Exp. Med.">
        <title>Human HLA-A0201-restricted cytotoxic T lymphocyte recognition of influenza A is dominated by T cells bearing the V beta 17 gene segment.</title>
        <authorList>
            <person name="Lehner P.J."/>
            <person name="Wang E.C."/>
            <person name="Moss P.A."/>
            <person name="Williams S."/>
            <person name="Platt K."/>
            <person name="Friedman S.M."/>
            <person name="Bell J.I."/>
            <person name="Borysiewicz L.K."/>
        </authorList>
    </citation>
    <scope>NUCLEOTIDE SEQUENCE [MRNA] OF 22-132</scope>
    <scope>CDR3 DOMAIN</scope>
    <scope>FUNCTION</scope>
    <scope>VARIANT SER-114</scope>
</reference>
<reference key="3">
    <citation type="journal article" date="2018" name="Front. Immunol.">
        <title>Single-Cell Approach to Influenza-Specific CD8+ T Cell Receptor Repertoires Across Different Age Groups, Tissues, and Following Influenza Virus Infection.</title>
        <authorList>
            <person name="Sant S."/>
            <person name="Grzelak L."/>
            <person name="Wang Z."/>
            <person name="Pizzolla A."/>
            <person name="Koutsakos M."/>
            <person name="Crowe J."/>
            <person name="Loudovaris T."/>
            <person name="Mannering S.I."/>
            <person name="Westall G.P."/>
            <person name="Wakim L.M."/>
            <person name="Rossjohn J."/>
            <person name="Gras S."/>
            <person name="Richards M."/>
            <person name="Xu J."/>
            <person name="Thomas P.G."/>
            <person name="Loh L."/>
            <person name="Nguyen T.H.O."/>
            <person name="Kedzierska K."/>
        </authorList>
    </citation>
    <scope>NUCLEOTIDE SEQUENCE [MRNA] OF 22-132</scope>
    <scope>CDR3 DOMAIN</scope>
    <scope>FUNCTION</scope>
    <scope>TISSUE SPECIFICITY</scope>
    <scope>SUBCELLULAR LOCATION</scope>
</reference>
<reference key="4">
    <citation type="journal article" date="1985" name="Proc. Natl. Acad. Sci. U.S.A.">
        <title>Sequence and evolution of the human T-cell antigen receptor beta-chain genes.</title>
        <authorList>
            <person name="Tunnacliffe A."/>
            <person name="Kefford R."/>
            <person name="Milstein C."/>
            <person name="Forster A."/>
            <person name="Rabbitts T.H."/>
        </authorList>
    </citation>
    <scope>NUCLEOTIDE SEQUENCE [GENOMIC DNA] (IMGT ALLELE TRBC2*01)</scope>
</reference>
<reference key="5">
    <citation type="journal article" date="2003" name="Nature">
        <title>The DNA sequence of human chromosome 7.</title>
        <authorList>
            <person name="Hillier L.W."/>
            <person name="Fulton R.S."/>
            <person name="Fulton L.A."/>
            <person name="Graves T.A."/>
            <person name="Pepin K.H."/>
            <person name="Wagner-McPherson C."/>
            <person name="Layman D."/>
            <person name="Maas J."/>
            <person name="Jaeger S."/>
            <person name="Walker R."/>
            <person name="Wylie K."/>
            <person name="Sekhon M."/>
            <person name="Becker M.C."/>
            <person name="O'Laughlin M.D."/>
            <person name="Schaller M.E."/>
            <person name="Fewell G.A."/>
            <person name="Delehaunty K.D."/>
            <person name="Miner T.L."/>
            <person name="Nash W.E."/>
            <person name="Cordes M."/>
            <person name="Du H."/>
            <person name="Sun H."/>
            <person name="Edwards J."/>
            <person name="Bradshaw-Cordum H."/>
            <person name="Ali J."/>
            <person name="Andrews S."/>
            <person name="Isak A."/>
            <person name="Vanbrunt A."/>
            <person name="Nguyen C."/>
            <person name="Du F."/>
            <person name="Lamar B."/>
            <person name="Courtney L."/>
            <person name="Kalicki J."/>
            <person name="Ozersky P."/>
            <person name="Bielicki L."/>
            <person name="Scott K."/>
            <person name="Holmes A."/>
            <person name="Harkins R."/>
            <person name="Harris A."/>
            <person name="Strong C.M."/>
            <person name="Hou S."/>
            <person name="Tomlinson C."/>
            <person name="Dauphin-Kohlberg S."/>
            <person name="Kozlowicz-Reilly A."/>
            <person name="Leonard S."/>
            <person name="Rohlfing T."/>
            <person name="Rock S.M."/>
            <person name="Tin-Wollam A.-M."/>
            <person name="Abbott A."/>
            <person name="Minx P."/>
            <person name="Maupin R."/>
            <person name="Strowmatt C."/>
            <person name="Latreille P."/>
            <person name="Miller N."/>
            <person name="Johnson D."/>
            <person name="Murray J."/>
            <person name="Woessner J.P."/>
            <person name="Wendl M.C."/>
            <person name="Yang S.-P."/>
            <person name="Schultz B.R."/>
            <person name="Wallis J.W."/>
            <person name="Spieth J."/>
            <person name="Bieri T.A."/>
            <person name="Nelson J.O."/>
            <person name="Berkowicz N."/>
            <person name="Wohldmann P.E."/>
            <person name="Cook L.L."/>
            <person name="Hickenbotham M.T."/>
            <person name="Eldred J."/>
            <person name="Williams D."/>
            <person name="Bedell J.A."/>
            <person name="Mardis E.R."/>
            <person name="Clifton S.W."/>
            <person name="Chissoe S.L."/>
            <person name="Marra M.A."/>
            <person name="Raymond C."/>
            <person name="Haugen E."/>
            <person name="Gillett W."/>
            <person name="Zhou Y."/>
            <person name="James R."/>
            <person name="Phelps K."/>
            <person name="Iadanoto S."/>
            <person name="Bubb K."/>
            <person name="Simms E."/>
            <person name="Levy R."/>
            <person name="Clendenning J."/>
            <person name="Kaul R."/>
            <person name="Kent W.J."/>
            <person name="Furey T.S."/>
            <person name="Baertsch R.A."/>
            <person name="Brent M.R."/>
            <person name="Keibler E."/>
            <person name="Flicek P."/>
            <person name="Bork P."/>
            <person name="Suyama M."/>
            <person name="Bailey J.A."/>
            <person name="Portnoy M.E."/>
            <person name="Torrents D."/>
            <person name="Chinwalla A.T."/>
            <person name="Gish W.R."/>
            <person name="Eddy S.R."/>
            <person name="McPherson J.D."/>
            <person name="Olson M.V."/>
            <person name="Eichler E.E."/>
            <person name="Green E.D."/>
            <person name="Waterston R.H."/>
            <person name="Wilson R.K."/>
        </authorList>
    </citation>
    <scope>NUCLEOTIDE SEQUENCE [LARGE SCALE GENOMIC DNA] (IMGT ALLELE TRBV19*01 AND IMGT ALLELE TRBJ2-7*01)</scope>
</reference>
<reference key="6">
    <citation type="journal article" date="1995" name="Immunogenetics">
        <title>Nomenclature for T-cell receptor (TCR) gene segments of the immune system.</title>
        <authorList>
            <consortium name="WHO-IUIS Nomenclature Sub-Committee on TCR Designation."/>
        </authorList>
    </citation>
    <scope>NOMENCLATURE</scope>
</reference>
<reference key="7">
    <citation type="journal article" date="2000" name="Exp. Clin. Immunogenet.">
        <title>Protein displays of the human T cell receptor alpha, beta, gamma and delta variable and joining regions.</title>
        <authorList>
            <person name="Folch G."/>
            <person name="Scaviner D."/>
            <person name="Contet V."/>
            <person name="Lefranc M.P."/>
        </authorList>
    </citation>
    <scope>CDR1 AND CDR2 DOMAINS</scope>
</reference>
<reference key="8">
    <citation type="book" date="2001" name="The T Cell Receptor FactsBook.">
        <title>The T Cell Receptor FactsBook.</title>
        <editorList>
            <person name="Lefranc M.P."/>
            <person name="Lefranc G."/>
        </editorList>
        <authorList>
            <person name="Lefranc M.P."/>
            <person name="Lefranc G."/>
        </authorList>
    </citation>
    <scope>NOMENCLATURE</scope>
</reference>
<reference key="9">
    <citation type="journal article" date="2009" name="Immunogenetics">
        <title>A clonotype nomenclature for T cell receptors.</title>
        <authorList>
            <person name="Yassai M.B."/>
            <person name="Naumov Y.N."/>
            <person name="Naumova E.N."/>
            <person name="Gorski J."/>
        </authorList>
    </citation>
    <scope>NOMENCLATURE</scope>
</reference>
<reference key="10">
    <citation type="journal article" date="2003" name="Nat. Immunol.">
        <title>A structural basis for immunodominant human T cell receptor recognition.</title>
        <authorList>
            <person name="Stewart-Jones G.B.E."/>
            <person name="McMichael A.J."/>
            <person name="Bell J.I."/>
            <person name="Stuart D.I."/>
            <person name="Jones E.Y."/>
        </authorList>
    </citation>
    <scope>X-RAY CRYSTALLOGRAPHY (1.40 ANGSTROMS) OF 19-261</scope>
    <scope>INTERACTION WITH PEPTIDE-HLA-A*02-B2M</scope>
    <scope>FUNCTION</scope>
    <scope>DOMAIN</scope>
    <scope>VARIANT SER-114</scope>
</reference>
<reference key="11">
    <citation type="journal article" date="2008" name="Immunity">
        <title>The structural dynamics and energetics of an immunodominant T cell receptor are programmed by its Vbeta domain.</title>
        <authorList>
            <person name="Ishizuka J."/>
            <person name="Stewart-Jones G.B."/>
            <person name="van der Merwe A."/>
            <person name="Bell J.I."/>
            <person name="McMichael A.J."/>
            <person name="Jones E.Y."/>
        </authorList>
    </citation>
    <scope>X-RAY CRYSTALLOGRAPHY (1.60 ANGSTROMS) OF 19-261</scope>
    <scope>INTERACTION WITH PEPTIDE-HLA-A*02-B2M</scope>
    <scope>FUNCTION</scope>
    <scope>MUTAGENESIS OF ASP-49; GLN-69; ILE-70 AND ARG-115</scope>
    <scope>DOMAIN</scope>
    <scope>VARIANT SER-114</scope>
</reference>
<reference key="12">
    <citation type="journal article" date="2016" name="Proc. Natl. Acad. Sci. U.S.A.">
        <title>Molecular basis for universal HLA-A*0201-restricted CD8+ T-cell immunity against influenza viruses.</title>
        <authorList>
            <person name="Valkenburg S.A."/>
            <person name="Josephs T.M."/>
            <person name="Clemens E.B."/>
            <person name="Grant E.J."/>
            <person name="Nguyen T.H."/>
            <person name="Wang G.C."/>
            <person name="Price D.A."/>
            <person name="Miller A."/>
            <person name="Tong S.Y."/>
            <person name="Thomas P.G."/>
            <person name="Doherty P.C."/>
            <person name="Rossjohn J."/>
            <person name="Gras S."/>
            <person name="Kedzierska K."/>
        </authorList>
    </citation>
    <scope>X-RAY CRYSTALLOGRAPHY (2.50 ANGSTROMS) OF 21-261</scope>
    <scope>INTERACTION WITH PEPTIDE-HLA-A*02-B2M</scope>
    <scope>DISULFIDE BOND</scope>
    <scope>FUNCTION</scope>
    <scope>TISSUE SPECIFICITY</scope>
    <scope>VARIANT SER-114</scope>
</reference>
<organism>
    <name type="scientific">Homo sapiens</name>
    <name type="common">Human</name>
    <dbReference type="NCBI Taxonomy" id="9606"/>
    <lineage>
        <taxon>Eukaryota</taxon>
        <taxon>Metazoa</taxon>
        <taxon>Chordata</taxon>
        <taxon>Craniata</taxon>
        <taxon>Vertebrata</taxon>
        <taxon>Euteleostomi</taxon>
        <taxon>Mammalia</taxon>
        <taxon>Eutheria</taxon>
        <taxon>Euarchontoglires</taxon>
        <taxon>Primates</taxon>
        <taxon>Haplorrhini</taxon>
        <taxon>Catarrhini</taxon>
        <taxon>Hominidae</taxon>
        <taxon>Homo</taxon>
    </lineage>
</organism>
<accession>P0DSE2</accession>
<protein>
    <recommendedName>
        <fullName evidence="13">M1-specific T cell receptor beta chain</fullName>
    </recommendedName>
    <alternativeName>
        <fullName evidence="13 14">TR beta chain TRBV19*01J2S7*01C*02</fullName>
    </alternativeName>
</protein>
<keyword id="KW-0002">3D-structure</keyword>
<keyword id="KW-1064">Adaptive immunity</keyword>
<keyword id="KW-1003">Cell membrane</keyword>
<keyword id="KW-1015">Disulfide bond</keyword>
<keyword id="KW-0325">Glycoprotein</keyword>
<keyword id="KW-0391">Immunity</keyword>
<keyword id="KW-0472">Membrane</keyword>
<keyword id="KW-0732">Signal</keyword>
<keyword id="KW-0812">Transmembrane</keyword>
<keyword id="KW-1133">Transmembrane helix</keyword>
<sequence>MSNQVLCCVVLCLLGANTVDGGITQSPKYLFRKEGQNVTLSCEQNLNHDAMYWYRQDPGQGLRLIYYSQIVNDFQKGDIAEGYSVSREKKESFPLTVTSAQKNPTAFYLCASSIRSSYEQYFGPGTRLTVTEDLKNVFPPKVAVFEPSEAEISHTQKATLVCLATGFYPDHVELSWWVNGKEVHSGVSTDPQPLKEQPALNDSRYCLSSRLRVSATFWQNPRNHFRCQVQFYGLSENDEWTQDRAKPVTQIVSAEAWGRADCGFTSESYQQGVLSATILYEILLGKATLYAVLVSALVLMAMVKRKDSRG</sequence>
<gene>
    <name evidence="21" type="primary">TRB</name>
</gene>
<dbReference type="EMBL" id="AAB20045">
    <property type="protein sequence ID" value="CAA84752.1"/>
    <property type="molecule type" value="mRNA"/>
</dbReference>
<dbReference type="EMBL" id="M12888">
    <property type="protein sequence ID" value="AAA60662.1"/>
    <property type="molecule type" value="Genomic_DNA"/>
</dbReference>
<dbReference type="EMBL" id="AC244472">
    <property type="status" value="NOT_ANNOTATED_CDS"/>
    <property type="molecule type" value="Genomic_DNA"/>
</dbReference>
<dbReference type="EMBL" id="AC239618">
    <property type="status" value="NOT_ANNOTATED_CDS"/>
    <property type="molecule type" value="Genomic_DNA"/>
</dbReference>
<dbReference type="PDB" id="1OGA">
    <property type="method" value="X-ray"/>
    <property type="resolution" value="1.40 A"/>
</dbReference>
<dbReference type="PDB" id="2VLJ">
    <property type="method" value="X-ray"/>
    <property type="resolution" value="2.40 A"/>
</dbReference>
<dbReference type="PDB" id="2VLK">
    <property type="method" value="X-ray"/>
    <property type="resolution" value="2.50 A"/>
</dbReference>
<dbReference type="PDB" id="2VLR">
    <property type="method" value="X-ray"/>
    <property type="resolution" value="2.30 A"/>
</dbReference>
<dbReference type="PDB" id="5HHM">
    <property type="method" value="X-ray"/>
    <property type="resolution" value="2.50 A"/>
</dbReference>
<dbReference type="PDB" id="5HHO">
    <property type="method" value="X-ray"/>
    <property type="resolution" value="2.95 A"/>
</dbReference>
<dbReference type="PDB" id="6JXR">
    <property type="method" value="EM"/>
    <property type="resolution" value="3.70 A"/>
    <property type="chains" value="n=119-310"/>
</dbReference>
<dbReference type="PDB" id="7FJD">
    <property type="method" value="EM"/>
    <property type="resolution" value="3.20 A"/>
    <property type="chains" value="n=119-310"/>
</dbReference>
<dbReference type="PDB" id="7FJE">
    <property type="method" value="EM"/>
    <property type="resolution" value="3.00 A"/>
    <property type="chains" value="n=119-310"/>
</dbReference>
<dbReference type="PDB" id="7FJF">
    <property type="method" value="EM"/>
    <property type="resolution" value="3.10 A"/>
    <property type="chains" value="n=119-310"/>
</dbReference>
<dbReference type="PDBsum" id="1OGA"/>
<dbReference type="PDBsum" id="2VLJ"/>
<dbReference type="PDBsum" id="2VLK"/>
<dbReference type="PDBsum" id="2VLR"/>
<dbReference type="PDBsum" id="5HHM"/>
<dbReference type="PDBsum" id="5HHO"/>
<dbReference type="PDBsum" id="6JXR"/>
<dbReference type="PDBsum" id="7FJD"/>
<dbReference type="PDBsum" id="7FJE"/>
<dbReference type="PDBsum" id="7FJF"/>
<dbReference type="SMR" id="P0DSE2"/>
<dbReference type="GlyCosmos" id="P0DSE2">
    <property type="glycosylation" value="2 sites, No reported glycans"/>
</dbReference>
<dbReference type="AGR" id="HGNC:12155"/>
<dbReference type="GeneCards" id="TRB"/>
<dbReference type="HGNC" id="HGNC:12155">
    <property type="gene designation" value="TRB"/>
</dbReference>
<dbReference type="MalaCards" id="TRB"/>
<dbReference type="Orphanet" id="99861">
    <property type="disease" value="Precursor T-cell acute lymphoblastic leukemia"/>
</dbReference>
<dbReference type="PathwayCommons" id="P0DSE2"/>
<dbReference type="ChiTaRS" id="TRB">
    <property type="organism name" value="human"/>
</dbReference>
<dbReference type="GO" id="GO:0009986">
    <property type="term" value="C:cell surface"/>
    <property type="evidence" value="ECO:0000314"/>
    <property type="project" value="UniProtKB"/>
</dbReference>
<dbReference type="GO" id="GO:0042101">
    <property type="term" value="C:T cell receptor complex"/>
    <property type="evidence" value="ECO:0000314"/>
    <property type="project" value="UniProtKB"/>
</dbReference>
<dbReference type="GO" id="GO:0002250">
    <property type="term" value="P:adaptive immune response"/>
    <property type="evidence" value="ECO:0000314"/>
    <property type="project" value="UniProtKB"/>
</dbReference>
<dbReference type="GO" id="GO:0002286">
    <property type="term" value="P:T cell activation involved in immune response"/>
    <property type="evidence" value="ECO:0000314"/>
    <property type="project" value="UniProtKB"/>
</dbReference>
<dbReference type="CDD" id="cd05769">
    <property type="entry name" value="IgC1_TCR_beta"/>
    <property type="match status" value="1"/>
</dbReference>
<dbReference type="CDD" id="cd05899">
    <property type="entry name" value="IgV_TCR_beta"/>
    <property type="match status" value="1"/>
</dbReference>
<dbReference type="FunFam" id="2.60.40.10:FF:001090">
    <property type="entry name" value="T cell receptor beta constant 1"/>
    <property type="match status" value="1"/>
</dbReference>
<dbReference type="Gene3D" id="2.60.40.10">
    <property type="entry name" value="Immunoglobulins"/>
    <property type="match status" value="2"/>
</dbReference>
<dbReference type="InterPro" id="IPR007110">
    <property type="entry name" value="Ig-like_dom"/>
</dbReference>
<dbReference type="InterPro" id="IPR036179">
    <property type="entry name" value="Ig-like_dom_sf"/>
</dbReference>
<dbReference type="InterPro" id="IPR013783">
    <property type="entry name" value="Ig-like_fold"/>
</dbReference>
<dbReference type="InterPro" id="IPR003597">
    <property type="entry name" value="Ig_C1-set"/>
</dbReference>
<dbReference type="InterPro" id="IPR003599">
    <property type="entry name" value="Ig_sub"/>
</dbReference>
<dbReference type="InterPro" id="IPR013106">
    <property type="entry name" value="Ig_V-set"/>
</dbReference>
<dbReference type="InterPro" id="IPR050413">
    <property type="entry name" value="TCR_beta_variable"/>
</dbReference>
<dbReference type="PANTHER" id="PTHR23268:SF28">
    <property type="entry name" value="T CELL RECEPTOR BETA VARIABLE 19"/>
    <property type="match status" value="1"/>
</dbReference>
<dbReference type="PANTHER" id="PTHR23268">
    <property type="entry name" value="T-CELL RECEPTOR BETA CHAIN"/>
    <property type="match status" value="1"/>
</dbReference>
<dbReference type="Pfam" id="PF07654">
    <property type="entry name" value="C1-set"/>
    <property type="match status" value="1"/>
</dbReference>
<dbReference type="Pfam" id="PF07686">
    <property type="entry name" value="V-set"/>
    <property type="match status" value="1"/>
</dbReference>
<dbReference type="SMART" id="SM00409">
    <property type="entry name" value="IG"/>
    <property type="match status" value="1"/>
</dbReference>
<dbReference type="SMART" id="SM00407">
    <property type="entry name" value="IGc1"/>
    <property type="match status" value="1"/>
</dbReference>
<dbReference type="SMART" id="SM00406">
    <property type="entry name" value="IGv"/>
    <property type="match status" value="1"/>
</dbReference>
<dbReference type="SUPFAM" id="SSF48726">
    <property type="entry name" value="Immunoglobulin"/>
    <property type="match status" value="2"/>
</dbReference>
<dbReference type="PROSITE" id="PS50835">
    <property type="entry name" value="IG_LIKE"/>
    <property type="match status" value="2"/>
</dbReference>